<dbReference type="EC" id="2.8.1.1"/>
<dbReference type="EMBL" id="Z81052">
    <property type="protein sequence ID" value="CAB02870.1"/>
    <property type="molecule type" value="Genomic_DNA"/>
</dbReference>
<dbReference type="PIR" id="T20344">
    <property type="entry name" value="T20344"/>
</dbReference>
<dbReference type="RefSeq" id="NP_505979.1">
    <property type="nucleotide sequence ID" value="NM_073578.7"/>
</dbReference>
<dbReference type="SMR" id="O17730"/>
<dbReference type="BioGRID" id="44642">
    <property type="interactions" value="4"/>
</dbReference>
<dbReference type="FunCoup" id="O17730">
    <property type="interactions" value="1457"/>
</dbReference>
<dbReference type="STRING" id="6239.D2023.5.1"/>
<dbReference type="PaxDb" id="6239-D2023.5"/>
<dbReference type="PeptideAtlas" id="O17730"/>
<dbReference type="EnsemblMetazoa" id="D2023.5.1">
    <property type="protein sequence ID" value="D2023.5.1"/>
    <property type="gene ID" value="WBGene00008409"/>
</dbReference>
<dbReference type="GeneID" id="179617"/>
<dbReference type="KEGG" id="cel:CELE_D2023.5"/>
<dbReference type="UCSC" id="D2023.5">
    <property type="organism name" value="c. elegans"/>
</dbReference>
<dbReference type="AGR" id="WB:WBGene00008409"/>
<dbReference type="CTD" id="179617"/>
<dbReference type="WormBase" id="D2023.5">
    <property type="protein sequence ID" value="CE09075"/>
    <property type="gene ID" value="WBGene00008409"/>
    <property type="gene designation" value="mpst-1"/>
</dbReference>
<dbReference type="eggNOG" id="KOG1529">
    <property type="taxonomic scope" value="Eukaryota"/>
</dbReference>
<dbReference type="GeneTree" id="ENSGT00510000046773"/>
<dbReference type="HOGENOM" id="CLU_847929_0_0_1"/>
<dbReference type="InParanoid" id="O17730"/>
<dbReference type="OMA" id="WIEYSHA"/>
<dbReference type="OrthoDB" id="270167at2759"/>
<dbReference type="PhylomeDB" id="O17730"/>
<dbReference type="Reactome" id="R-CEL-1614558">
    <property type="pathway name" value="Degradation of cysteine and homocysteine"/>
</dbReference>
<dbReference type="PRO" id="PR:O17730"/>
<dbReference type="Proteomes" id="UP000001940">
    <property type="component" value="Chromosome V"/>
</dbReference>
<dbReference type="Bgee" id="WBGene00008409">
    <property type="expression patterns" value="Expressed in germ line (C elegans) and 4 other cell types or tissues"/>
</dbReference>
<dbReference type="GO" id="GO:0005739">
    <property type="term" value="C:mitochondrion"/>
    <property type="evidence" value="ECO:0000318"/>
    <property type="project" value="GO_Central"/>
</dbReference>
<dbReference type="GO" id="GO:0016784">
    <property type="term" value="F:3-mercaptopyruvate sulfurtransferase activity"/>
    <property type="evidence" value="ECO:0000318"/>
    <property type="project" value="GO_Central"/>
</dbReference>
<dbReference type="GO" id="GO:0004792">
    <property type="term" value="F:thiosulfate-cyanide sulfurtransferase activity"/>
    <property type="evidence" value="ECO:0000318"/>
    <property type="project" value="GO_Central"/>
</dbReference>
<dbReference type="CDD" id="cd01448">
    <property type="entry name" value="TST_Repeat_1"/>
    <property type="match status" value="1"/>
</dbReference>
<dbReference type="FunFam" id="3.40.250.10:FF:000058">
    <property type="entry name" value="MercaptoPyruvate SulfurTransferase homolog"/>
    <property type="match status" value="1"/>
</dbReference>
<dbReference type="FunFam" id="3.40.250.10:FF:000097">
    <property type="entry name" value="Putative thiosulfate sulfurtransferase mpst-1"/>
    <property type="match status" value="1"/>
</dbReference>
<dbReference type="Gene3D" id="3.40.250.10">
    <property type="entry name" value="Rhodanese-like domain"/>
    <property type="match status" value="2"/>
</dbReference>
<dbReference type="InterPro" id="IPR001763">
    <property type="entry name" value="Rhodanese-like_dom"/>
</dbReference>
<dbReference type="InterPro" id="IPR036873">
    <property type="entry name" value="Rhodanese-like_dom_sf"/>
</dbReference>
<dbReference type="InterPro" id="IPR045078">
    <property type="entry name" value="TST/MPST-like"/>
</dbReference>
<dbReference type="PANTHER" id="PTHR11364">
    <property type="entry name" value="THIOSULFATE SULFERTANSFERASE"/>
    <property type="match status" value="1"/>
</dbReference>
<dbReference type="PANTHER" id="PTHR11364:SF7">
    <property type="entry name" value="THIOSULFATE SULFURTRANSFERASE MPST-1-RELATED"/>
    <property type="match status" value="1"/>
</dbReference>
<dbReference type="Pfam" id="PF00581">
    <property type="entry name" value="Rhodanese"/>
    <property type="match status" value="1"/>
</dbReference>
<dbReference type="SMART" id="SM00450">
    <property type="entry name" value="RHOD"/>
    <property type="match status" value="2"/>
</dbReference>
<dbReference type="SUPFAM" id="SSF52821">
    <property type="entry name" value="Rhodanese/Cell cycle control phosphatase"/>
    <property type="match status" value="2"/>
</dbReference>
<dbReference type="PROSITE" id="PS50206">
    <property type="entry name" value="RHODANESE_3"/>
    <property type="match status" value="2"/>
</dbReference>
<organism>
    <name type="scientific">Caenorhabditis elegans</name>
    <dbReference type="NCBI Taxonomy" id="6239"/>
    <lineage>
        <taxon>Eukaryota</taxon>
        <taxon>Metazoa</taxon>
        <taxon>Ecdysozoa</taxon>
        <taxon>Nematoda</taxon>
        <taxon>Chromadorea</taxon>
        <taxon>Rhabditida</taxon>
        <taxon>Rhabditina</taxon>
        <taxon>Rhabditomorpha</taxon>
        <taxon>Rhabditoidea</taxon>
        <taxon>Rhabditidae</taxon>
        <taxon>Peloderinae</taxon>
        <taxon>Caenorhabditis</taxon>
    </lineage>
</organism>
<name>THT2_CAEEL</name>
<feature type="chain" id="PRO_0000139404" description="Putative thiosulfate sulfurtransferase mpst-1">
    <location>
        <begin position="1"/>
        <end position="328"/>
    </location>
</feature>
<feature type="domain" description="Rhodanese 1" evidence="2">
    <location>
        <begin position="22"/>
        <end position="162"/>
    </location>
</feature>
<feature type="domain" description="Rhodanese 2" evidence="2">
    <location>
        <begin position="202"/>
        <end position="320"/>
    </location>
</feature>
<feature type="active site" description="Cysteine persulfide intermediate" evidence="2">
    <location>
        <position position="278"/>
    </location>
</feature>
<keyword id="KW-1185">Reference proteome</keyword>
<keyword id="KW-0677">Repeat</keyword>
<keyword id="KW-0808">Transferase</keyword>
<accession>O17730</accession>
<sequence>MSLKKIIDVKSVNTLLKKGIINKEGVRIIDCSFAVAPRPDWKEFEQEGYGDFKNLMAEPSPSRNLYLAGHIPEAVHVDLDIATYPSRYQRFQQYRADLFEEYAQMVGLNNKEHFIFYGKGAFGGMLFASKVAWIFKSYGHENISLVDGGFDSWKRNGFEVSTELVKLPAGNFKAEDNFKKYVITFQELEAKKDGEDKQFIEKTSEINFLDSRIRGQFDGTQETGLDPHLVNGTRIAGFKNLPSAELLVKGGNLKSEEEIKSWLTQNGYVENQPTITSCNAGIQAALLAYVIDAVKPSQNPPRVYNGSLKEMELRAPKKISEGPQHLPH</sequence>
<protein>
    <recommendedName>
        <fullName>Putative thiosulfate sulfurtransferase mpst-1</fullName>
        <ecNumber>2.8.1.1</ecNumber>
    </recommendedName>
    <alternativeName>
        <fullName>Mercaptopyruvate sulfurtransferase homolog 1</fullName>
    </alternativeName>
</protein>
<reference key="1">
    <citation type="journal article" date="1998" name="Science">
        <title>Genome sequence of the nematode C. elegans: a platform for investigating biology.</title>
        <authorList>
            <consortium name="The C. elegans sequencing consortium"/>
        </authorList>
    </citation>
    <scope>NUCLEOTIDE SEQUENCE [LARGE SCALE GENOMIC DNA]</scope>
    <source>
        <strain>Bristol N2</strain>
    </source>
</reference>
<reference key="2">
    <citation type="journal article" date="2011" name="J. Toxicol.">
        <title>Sulfurous gases as biological messengers and toxins: comparative genetics of their metabolism in model organisms.</title>
        <authorList>
            <person name="Mathew N.D."/>
            <person name="Schlipalius D.I."/>
            <person name="Ebert P.R."/>
        </authorList>
    </citation>
    <scope>IDENTIFICATION</scope>
</reference>
<reference key="3">
    <citation type="journal article" date="2014" name="Antioxid. Redox Signal.">
        <title>Hydrogen sulfide is an endogenous regulator of aging in Caenorhabditis elegans.</title>
        <authorList>
            <person name="Qabazard B."/>
            <person name="Li L."/>
            <person name="Gruber J."/>
            <person name="Peh M.T."/>
            <person name="Ng L.F."/>
            <person name="Kumar S.D."/>
            <person name="Rose P."/>
            <person name="Tan C.H."/>
            <person name="Dymock B.W."/>
            <person name="Wei F."/>
            <person name="Swain S.C."/>
            <person name="Halliwell B."/>
            <person name="Sturzenbaum S.R."/>
            <person name="Moore P.K."/>
        </authorList>
    </citation>
    <scope>DISRUPTION PHENOTYPE</scope>
</reference>
<proteinExistence type="inferred from homology"/>
<gene>
    <name type="primary">mpst-1</name>
    <name type="ORF">D2023.5</name>
</gene>
<comment type="catalytic activity">
    <reaction>
        <text>thiosulfate + hydrogen cyanide = thiocyanate + sulfite + 2 H(+)</text>
        <dbReference type="Rhea" id="RHEA:16881"/>
        <dbReference type="ChEBI" id="CHEBI:15378"/>
        <dbReference type="ChEBI" id="CHEBI:17359"/>
        <dbReference type="ChEBI" id="CHEBI:18022"/>
        <dbReference type="ChEBI" id="CHEBI:18407"/>
        <dbReference type="ChEBI" id="CHEBI:33542"/>
        <dbReference type="EC" id="2.8.1.1"/>
    </reaction>
</comment>
<comment type="domain">
    <text evidence="1">Contains two rhodanese domains with different primary structures but with near identical secondary structure conformations suggesting a common evolutionary origin. Only the C-terminal rhodanese domain contains the catalytic cysteine residue (By similarity).</text>
</comment>
<comment type="disruption phenotype">
    <text evidence="3">Knockdown and RNAi cause reduced lifespan. Knockdown reduced brood size and halved the production of H(2)S.</text>
</comment>
<evidence type="ECO:0000250" key="1"/>
<evidence type="ECO:0000255" key="2">
    <source>
        <dbReference type="PROSITE-ProRule" id="PRU00173"/>
    </source>
</evidence>
<evidence type="ECO:0000269" key="3">
    <source>
    </source>
</evidence>